<sequence>MTKGTTSMGQRHGRTHILCRRCGRNSYHVQWERCAACAYPRASRRRYNWSVKAIKRRRTGTGRCRYLKVVNRRIANHFKTPKA</sequence>
<organism>
    <name type="scientific">Leishmania infantum</name>
    <dbReference type="NCBI Taxonomy" id="5671"/>
    <lineage>
        <taxon>Eukaryota</taxon>
        <taxon>Discoba</taxon>
        <taxon>Euglenozoa</taxon>
        <taxon>Kinetoplastea</taxon>
        <taxon>Metakinetoplastina</taxon>
        <taxon>Trypanosomatida</taxon>
        <taxon>Trypanosomatidae</taxon>
        <taxon>Leishmaniinae</taxon>
        <taxon>Leishmania</taxon>
    </lineage>
</organism>
<accession>P62886</accession>
<accession>P39094</accession>
<feature type="initiator methionine" description="Removed" evidence="1">
    <location>
        <position position="1"/>
    </location>
</feature>
<feature type="chain" id="PRO_0000139713" description="Large ribosomal subunit protein eL37">
    <location>
        <begin position="2"/>
        <end position="83"/>
    </location>
</feature>
<feature type="zinc finger region" description="C4-type" evidence="2">
    <location>
        <begin position="19"/>
        <end position="37"/>
    </location>
</feature>
<feature type="binding site" evidence="1">
    <location>
        <position position="19"/>
    </location>
    <ligand>
        <name>Zn(2+)</name>
        <dbReference type="ChEBI" id="CHEBI:29105"/>
    </ligand>
</feature>
<feature type="binding site" evidence="1">
    <location>
        <position position="22"/>
    </location>
    <ligand>
        <name>Zn(2+)</name>
        <dbReference type="ChEBI" id="CHEBI:29105"/>
    </ligand>
</feature>
<feature type="binding site" evidence="1">
    <location>
        <position position="34"/>
    </location>
    <ligand>
        <name>Zn(2+)</name>
        <dbReference type="ChEBI" id="CHEBI:29105"/>
    </ligand>
</feature>
<feature type="binding site" evidence="1">
    <location>
        <position position="37"/>
    </location>
    <ligand>
        <name>Zn(2+)</name>
        <dbReference type="ChEBI" id="CHEBI:29105"/>
    </ligand>
</feature>
<evidence type="ECO:0000250" key="1"/>
<evidence type="ECO:0000255" key="2"/>
<evidence type="ECO:0000305" key="3"/>
<gene>
    <name type="primary">RPL37</name>
</gene>
<proteinExistence type="inferred from homology"/>
<protein>
    <recommendedName>
        <fullName evidence="3">Large ribosomal subunit protein eL37</fullName>
    </recommendedName>
    <alternativeName>
        <fullName>60S ribosomal protein L37</fullName>
    </alternativeName>
</protein>
<comment type="function">
    <text evidence="1">Binds to the 23S rRNA.</text>
</comment>
<comment type="cofactor">
    <cofactor evidence="1">
        <name>Zn(2+)</name>
        <dbReference type="ChEBI" id="CHEBI:29105"/>
    </cofactor>
    <text evidence="1">Binds 1 zinc ion per subunit.</text>
</comment>
<comment type="miscellaneous">
    <text>There are two genes for L37 in L.infantum.</text>
</comment>
<comment type="similarity">
    <text evidence="3">Belongs to the eukaryotic ribosomal protein eL37 family.</text>
</comment>
<name>RL37_LEIIN</name>
<dbReference type="EMBL" id="L16952">
    <property type="protein sequence ID" value="AAA29264.1"/>
    <property type="molecule type" value="Genomic_DNA"/>
</dbReference>
<dbReference type="EMBL" id="U35460">
    <property type="protein sequence ID" value="AAA79066.1"/>
    <property type="molecule type" value="mRNA"/>
</dbReference>
<dbReference type="SMR" id="P62886"/>
<dbReference type="VEuPathDB" id="TriTrypDB:LINF_330028300"/>
<dbReference type="eggNOG" id="KOG3475">
    <property type="taxonomic scope" value="Eukaryota"/>
</dbReference>
<dbReference type="GO" id="GO:0022625">
    <property type="term" value="C:cytosolic large ribosomal subunit"/>
    <property type="evidence" value="ECO:0007669"/>
    <property type="project" value="TreeGrafter"/>
</dbReference>
<dbReference type="GO" id="GO:0019843">
    <property type="term" value="F:rRNA binding"/>
    <property type="evidence" value="ECO:0007669"/>
    <property type="project" value="UniProtKB-KW"/>
</dbReference>
<dbReference type="GO" id="GO:0003735">
    <property type="term" value="F:structural constituent of ribosome"/>
    <property type="evidence" value="ECO:0007669"/>
    <property type="project" value="InterPro"/>
</dbReference>
<dbReference type="GO" id="GO:0008270">
    <property type="term" value="F:zinc ion binding"/>
    <property type="evidence" value="ECO:0007669"/>
    <property type="project" value="UniProtKB-KW"/>
</dbReference>
<dbReference type="GO" id="GO:0006412">
    <property type="term" value="P:translation"/>
    <property type="evidence" value="ECO:0007669"/>
    <property type="project" value="InterPro"/>
</dbReference>
<dbReference type="FunFam" id="2.20.25.30:FF:000004">
    <property type="entry name" value="Ribosomal protein L37"/>
    <property type="match status" value="1"/>
</dbReference>
<dbReference type="Gene3D" id="2.20.25.30">
    <property type="match status" value="1"/>
</dbReference>
<dbReference type="InterPro" id="IPR001569">
    <property type="entry name" value="Ribosomal_eL37"/>
</dbReference>
<dbReference type="InterPro" id="IPR011331">
    <property type="entry name" value="Ribosomal_eL37/eL43"/>
</dbReference>
<dbReference type="InterPro" id="IPR018267">
    <property type="entry name" value="Ribosomal_eL37_CS"/>
</dbReference>
<dbReference type="InterPro" id="IPR011332">
    <property type="entry name" value="Ribosomal_zn-bd"/>
</dbReference>
<dbReference type="NCBIfam" id="NF003214">
    <property type="entry name" value="PRK04179.1"/>
    <property type="match status" value="1"/>
</dbReference>
<dbReference type="PANTHER" id="PTHR10768">
    <property type="entry name" value="60S RIBOSOMAL PROTEIN L37"/>
    <property type="match status" value="1"/>
</dbReference>
<dbReference type="PANTHER" id="PTHR10768:SF0">
    <property type="entry name" value="RIBOSOMAL PROTEIN L37"/>
    <property type="match status" value="1"/>
</dbReference>
<dbReference type="Pfam" id="PF01907">
    <property type="entry name" value="Ribosomal_L37e"/>
    <property type="match status" value="1"/>
</dbReference>
<dbReference type="SUPFAM" id="SSF57829">
    <property type="entry name" value="Zn-binding ribosomal proteins"/>
    <property type="match status" value="1"/>
</dbReference>
<dbReference type="PROSITE" id="PS01077">
    <property type="entry name" value="RIBOSOMAL_L37E"/>
    <property type="match status" value="1"/>
</dbReference>
<keyword id="KW-0479">Metal-binding</keyword>
<keyword id="KW-0687">Ribonucleoprotein</keyword>
<keyword id="KW-0689">Ribosomal protein</keyword>
<keyword id="KW-0694">RNA-binding</keyword>
<keyword id="KW-0699">rRNA-binding</keyword>
<keyword id="KW-0862">Zinc</keyword>
<keyword id="KW-0863">Zinc-finger</keyword>
<reference key="1">
    <citation type="journal article" date="1993" name="Mol. Biochem. Parasitol.">
        <title>The LD1 amplified element from Leishmania infantum encodes a homolog of ribosomal protein L37.</title>
        <authorList>
            <person name="Myler P.J."/>
            <person name="Tripp C.A."/>
            <person name="Thomas L."/>
            <person name="Venkataraman G.M."/>
            <person name="Merlin G."/>
            <person name="Stuart K."/>
        </authorList>
    </citation>
    <scope>NUCLEOTIDE SEQUENCE</scope>
    <source>
        <strain>MHOM/BL/67/ITMAP263 / LSB-7.1</strain>
    </source>
</reference>
<reference key="2">
    <citation type="submission" date="1995-09" db="EMBL/GenBank/DDBJ databases">
        <title>Ribosomal protein L37 in Leishmania is encoded by duplicate genes.</title>
        <authorList>
            <person name="Devos T."/>
            <person name="Merlin G."/>
            <person name="Venkataraman M.V.K."/>
            <person name="Myler P.J."/>
            <person name="Stuart K."/>
        </authorList>
    </citation>
    <scope>NUCLEOTIDE SEQUENCE</scope>
    <source>
        <strain>MHOM/BL/67/ITMAP263 / LSB-7.1</strain>
    </source>
</reference>